<dbReference type="EMBL" id="AE017332">
    <property type="protein sequence ID" value="AAV27889.1"/>
    <property type="molecule type" value="Genomic_DNA"/>
</dbReference>
<dbReference type="RefSeq" id="WP_011206282.1">
    <property type="nucleotide sequence ID" value="NC_006360.1"/>
</dbReference>
<dbReference type="SMR" id="Q600K7"/>
<dbReference type="KEGG" id="mhy:mhp448"/>
<dbReference type="eggNOG" id="COG0218">
    <property type="taxonomic scope" value="Bacteria"/>
</dbReference>
<dbReference type="HOGENOM" id="CLU_033732_3_2_14"/>
<dbReference type="PhylomeDB" id="Q600K7"/>
<dbReference type="Proteomes" id="UP000006822">
    <property type="component" value="Chromosome"/>
</dbReference>
<dbReference type="GO" id="GO:0005829">
    <property type="term" value="C:cytosol"/>
    <property type="evidence" value="ECO:0007669"/>
    <property type="project" value="TreeGrafter"/>
</dbReference>
<dbReference type="GO" id="GO:0005525">
    <property type="term" value="F:GTP binding"/>
    <property type="evidence" value="ECO:0007669"/>
    <property type="project" value="UniProtKB-UniRule"/>
</dbReference>
<dbReference type="GO" id="GO:0046872">
    <property type="term" value="F:metal ion binding"/>
    <property type="evidence" value="ECO:0007669"/>
    <property type="project" value="UniProtKB-KW"/>
</dbReference>
<dbReference type="GO" id="GO:0000917">
    <property type="term" value="P:division septum assembly"/>
    <property type="evidence" value="ECO:0007669"/>
    <property type="project" value="UniProtKB-KW"/>
</dbReference>
<dbReference type="CDD" id="cd01876">
    <property type="entry name" value="YihA_EngB"/>
    <property type="match status" value="1"/>
</dbReference>
<dbReference type="Gene3D" id="3.40.50.300">
    <property type="entry name" value="P-loop containing nucleotide triphosphate hydrolases"/>
    <property type="match status" value="1"/>
</dbReference>
<dbReference type="HAMAP" id="MF_00321">
    <property type="entry name" value="GTPase_EngB"/>
    <property type="match status" value="1"/>
</dbReference>
<dbReference type="InterPro" id="IPR030393">
    <property type="entry name" value="G_ENGB_dom"/>
</dbReference>
<dbReference type="InterPro" id="IPR006073">
    <property type="entry name" value="GTP-bd"/>
</dbReference>
<dbReference type="InterPro" id="IPR019987">
    <property type="entry name" value="GTP-bd_ribosome_bio_YsxC"/>
</dbReference>
<dbReference type="InterPro" id="IPR027417">
    <property type="entry name" value="P-loop_NTPase"/>
</dbReference>
<dbReference type="InterPro" id="IPR005225">
    <property type="entry name" value="Small_GTP-bd"/>
</dbReference>
<dbReference type="NCBIfam" id="TIGR03598">
    <property type="entry name" value="GTPase_YsxC"/>
    <property type="match status" value="1"/>
</dbReference>
<dbReference type="NCBIfam" id="TIGR00231">
    <property type="entry name" value="small_GTP"/>
    <property type="match status" value="1"/>
</dbReference>
<dbReference type="PANTHER" id="PTHR11649:SF13">
    <property type="entry name" value="ENGB-TYPE G DOMAIN-CONTAINING PROTEIN"/>
    <property type="match status" value="1"/>
</dbReference>
<dbReference type="PANTHER" id="PTHR11649">
    <property type="entry name" value="MSS1/TRME-RELATED GTP-BINDING PROTEIN"/>
    <property type="match status" value="1"/>
</dbReference>
<dbReference type="Pfam" id="PF01926">
    <property type="entry name" value="MMR_HSR1"/>
    <property type="match status" value="1"/>
</dbReference>
<dbReference type="SUPFAM" id="SSF52540">
    <property type="entry name" value="P-loop containing nucleoside triphosphate hydrolases"/>
    <property type="match status" value="1"/>
</dbReference>
<dbReference type="PROSITE" id="PS51706">
    <property type="entry name" value="G_ENGB"/>
    <property type="match status" value="1"/>
</dbReference>
<accession>Q600K7</accession>
<evidence type="ECO:0000255" key="1">
    <source>
        <dbReference type="HAMAP-Rule" id="MF_00321"/>
    </source>
</evidence>
<proteinExistence type="inferred from homology"/>
<gene>
    <name evidence="1" type="primary">engB</name>
    <name type="ordered locus">mhp448</name>
</gene>
<protein>
    <recommendedName>
        <fullName evidence="1">Probable GTP-binding protein EngB</fullName>
    </recommendedName>
</protein>
<sequence>MVKCKLFFWLISWFLKVKNGEKVWKFLKSCPENCYSEPQFAFIGRSNVGKSTLINALANKKIAKTSTKPGRTQLLNFYKNESEKLFVDLPGYGYAAVSKTKKHQIDRIIAGYFQKDQPISAVFLILDARVGFTNLDYIMIEYIIQQGFKLHILANKIDKTNQSTRAILLNQCKKLKLNCLLISAKNKNNLSKLQELLE</sequence>
<keyword id="KW-0131">Cell cycle</keyword>
<keyword id="KW-0132">Cell division</keyword>
<keyword id="KW-0342">GTP-binding</keyword>
<keyword id="KW-0460">Magnesium</keyword>
<keyword id="KW-0479">Metal-binding</keyword>
<keyword id="KW-0547">Nucleotide-binding</keyword>
<keyword id="KW-0717">Septation</keyword>
<feature type="chain" id="PRO_0000266895" description="Probable GTP-binding protein EngB">
    <location>
        <begin position="1"/>
        <end position="198"/>
    </location>
</feature>
<feature type="domain" description="EngB-type G" evidence="1">
    <location>
        <begin position="36"/>
        <end position="198"/>
    </location>
</feature>
<feature type="binding site" evidence="1">
    <location>
        <begin position="44"/>
        <end position="51"/>
    </location>
    <ligand>
        <name>GTP</name>
        <dbReference type="ChEBI" id="CHEBI:37565"/>
    </ligand>
</feature>
<feature type="binding site" evidence="1">
    <location>
        <position position="51"/>
    </location>
    <ligand>
        <name>Mg(2+)</name>
        <dbReference type="ChEBI" id="CHEBI:18420"/>
    </ligand>
</feature>
<feature type="binding site" evidence="1">
    <location>
        <begin position="70"/>
        <end position="74"/>
    </location>
    <ligand>
        <name>GTP</name>
        <dbReference type="ChEBI" id="CHEBI:37565"/>
    </ligand>
</feature>
<feature type="binding site" evidence="1">
    <location>
        <position position="72"/>
    </location>
    <ligand>
        <name>Mg(2+)</name>
        <dbReference type="ChEBI" id="CHEBI:18420"/>
    </ligand>
</feature>
<feature type="binding site" evidence="1">
    <location>
        <begin position="88"/>
        <end position="91"/>
    </location>
    <ligand>
        <name>GTP</name>
        <dbReference type="ChEBI" id="CHEBI:37565"/>
    </ligand>
</feature>
<feature type="binding site" evidence="1">
    <location>
        <begin position="155"/>
        <end position="158"/>
    </location>
    <ligand>
        <name>GTP</name>
        <dbReference type="ChEBI" id="CHEBI:37565"/>
    </ligand>
</feature>
<feature type="binding site" evidence="1">
    <location>
        <begin position="182"/>
        <end position="184"/>
    </location>
    <ligand>
        <name>GTP</name>
        <dbReference type="ChEBI" id="CHEBI:37565"/>
    </ligand>
</feature>
<reference key="1">
    <citation type="journal article" date="2004" name="J. Bacteriol.">
        <title>The genome sequence of Mycoplasma hyopneumoniae strain 232, the agent of swine mycoplasmosis.</title>
        <authorList>
            <person name="Minion F.C."/>
            <person name="Lefkowitz E.J."/>
            <person name="Madsen M.L."/>
            <person name="Cleary B.J."/>
            <person name="Swartzell S.M."/>
            <person name="Mahairas G.G."/>
        </authorList>
    </citation>
    <scope>NUCLEOTIDE SEQUENCE [LARGE SCALE GENOMIC DNA]</scope>
    <source>
        <strain>232</strain>
    </source>
</reference>
<comment type="function">
    <text evidence="1">Necessary for normal cell division and for the maintenance of normal septation.</text>
</comment>
<comment type="cofactor">
    <cofactor evidence="1">
        <name>Mg(2+)</name>
        <dbReference type="ChEBI" id="CHEBI:18420"/>
    </cofactor>
</comment>
<comment type="similarity">
    <text evidence="1">Belongs to the TRAFAC class TrmE-Era-EngA-EngB-Septin-like GTPase superfamily. EngB GTPase family.</text>
</comment>
<organism>
    <name type="scientific">Mesomycoplasma hyopneumoniae (strain 232)</name>
    <name type="common">Mycoplasma hyopneumoniae</name>
    <dbReference type="NCBI Taxonomy" id="295358"/>
    <lineage>
        <taxon>Bacteria</taxon>
        <taxon>Bacillati</taxon>
        <taxon>Mycoplasmatota</taxon>
        <taxon>Mycoplasmoidales</taxon>
        <taxon>Metamycoplasmataceae</taxon>
        <taxon>Mesomycoplasma</taxon>
    </lineage>
</organism>
<name>ENGB_MESH2</name>